<reference key="1">
    <citation type="journal article" date="2004" name="Science">
        <title>The genomic sequence of the accidental pathogen Legionella pneumophila.</title>
        <authorList>
            <person name="Chien M."/>
            <person name="Morozova I."/>
            <person name="Shi S."/>
            <person name="Sheng H."/>
            <person name="Chen J."/>
            <person name="Gomez S.M."/>
            <person name="Asamani G."/>
            <person name="Hill K."/>
            <person name="Nuara J."/>
            <person name="Feder M."/>
            <person name="Rineer J."/>
            <person name="Greenberg J.J."/>
            <person name="Steshenko V."/>
            <person name="Park S.H."/>
            <person name="Zhao B."/>
            <person name="Teplitskaya E."/>
            <person name="Edwards J.R."/>
            <person name="Pampou S."/>
            <person name="Georghiou A."/>
            <person name="Chou I.-C."/>
            <person name="Iannuccilli W."/>
            <person name="Ulz M.E."/>
            <person name="Kim D.H."/>
            <person name="Geringer-Sameth A."/>
            <person name="Goldsberry C."/>
            <person name="Morozov P."/>
            <person name="Fischer S.G."/>
            <person name="Segal G."/>
            <person name="Qu X."/>
            <person name="Rzhetsky A."/>
            <person name="Zhang P."/>
            <person name="Cayanis E."/>
            <person name="De Jong P.J."/>
            <person name="Ju J."/>
            <person name="Kalachikov S."/>
            <person name="Shuman H.A."/>
            <person name="Russo J.J."/>
        </authorList>
    </citation>
    <scope>NUCLEOTIDE SEQUENCE [LARGE SCALE GENOMIC DNA]</scope>
    <source>
        <strain>Philadelphia 1 / ATCC 33152 / DSM 7513</strain>
    </source>
</reference>
<protein>
    <recommendedName>
        <fullName evidence="1">Glutamyl-tRNA reductase</fullName>
        <shortName evidence="1">GluTR</shortName>
        <ecNumber evidence="1">1.2.1.70</ecNumber>
    </recommendedName>
</protein>
<keyword id="KW-0521">NADP</keyword>
<keyword id="KW-0560">Oxidoreductase</keyword>
<keyword id="KW-0627">Porphyrin biosynthesis</keyword>
<keyword id="KW-1185">Reference proteome</keyword>
<dbReference type="EC" id="1.2.1.70" evidence="1"/>
<dbReference type="EMBL" id="AE017354">
    <property type="protein sequence ID" value="AAU28397.1"/>
    <property type="status" value="ALT_INIT"/>
    <property type="molecule type" value="Genomic_DNA"/>
</dbReference>
<dbReference type="RefSeq" id="WP_015444133.1">
    <property type="nucleotide sequence ID" value="NC_002942.5"/>
</dbReference>
<dbReference type="RefSeq" id="YP_096344.1">
    <property type="nucleotide sequence ID" value="NC_002942.5"/>
</dbReference>
<dbReference type="SMR" id="Q5ZT30"/>
<dbReference type="STRING" id="272624.lpg2335"/>
<dbReference type="PaxDb" id="272624-lpg2335"/>
<dbReference type="DNASU" id="3080536"/>
<dbReference type="GeneID" id="57036327"/>
<dbReference type="KEGG" id="lpn:lpg2335"/>
<dbReference type="PATRIC" id="fig|272624.6.peg.2453"/>
<dbReference type="eggNOG" id="COG0373">
    <property type="taxonomic scope" value="Bacteria"/>
</dbReference>
<dbReference type="HOGENOM" id="CLU_035113_2_2_6"/>
<dbReference type="OrthoDB" id="110209at2"/>
<dbReference type="UniPathway" id="UPA00251">
    <property type="reaction ID" value="UER00316"/>
</dbReference>
<dbReference type="Proteomes" id="UP000000609">
    <property type="component" value="Chromosome"/>
</dbReference>
<dbReference type="GO" id="GO:0008883">
    <property type="term" value="F:glutamyl-tRNA reductase activity"/>
    <property type="evidence" value="ECO:0007669"/>
    <property type="project" value="UniProtKB-UniRule"/>
</dbReference>
<dbReference type="GO" id="GO:0050661">
    <property type="term" value="F:NADP binding"/>
    <property type="evidence" value="ECO:0007669"/>
    <property type="project" value="InterPro"/>
</dbReference>
<dbReference type="GO" id="GO:0019353">
    <property type="term" value="P:protoporphyrinogen IX biosynthetic process from glutamate"/>
    <property type="evidence" value="ECO:0007669"/>
    <property type="project" value="TreeGrafter"/>
</dbReference>
<dbReference type="CDD" id="cd05213">
    <property type="entry name" value="NAD_bind_Glutamyl_tRNA_reduct"/>
    <property type="match status" value="1"/>
</dbReference>
<dbReference type="FunFam" id="3.30.460.30:FF:000001">
    <property type="entry name" value="Glutamyl-tRNA reductase"/>
    <property type="match status" value="1"/>
</dbReference>
<dbReference type="FunFam" id="3.40.50.720:FF:000031">
    <property type="entry name" value="Glutamyl-tRNA reductase"/>
    <property type="match status" value="1"/>
</dbReference>
<dbReference type="Gene3D" id="3.30.460.30">
    <property type="entry name" value="Glutamyl-tRNA reductase, N-terminal domain"/>
    <property type="match status" value="1"/>
</dbReference>
<dbReference type="Gene3D" id="3.40.50.720">
    <property type="entry name" value="NAD(P)-binding Rossmann-like Domain"/>
    <property type="match status" value="1"/>
</dbReference>
<dbReference type="HAMAP" id="MF_00087">
    <property type="entry name" value="Glu_tRNA_reductase"/>
    <property type="match status" value="1"/>
</dbReference>
<dbReference type="InterPro" id="IPR000343">
    <property type="entry name" value="4pyrrol_synth_GluRdtase"/>
</dbReference>
<dbReference type="InterPro" id="IPR015896">
    <property type="entry name" value="4pyrrol_synth_GluRdtase_dimer"/>
</dbReference>
<dbReference type="InterPro" id="IPR015895">
    <property type="entry name" value="4pyrrol_synth_GluRdtase_N"/>
</dbReference>
<dbReference type="InterPro" id="IPR036453">
    <property type="entry name" value="GluRdtase_dimer_dom_sf"/>
</dbReference>
<dbReference type="InterPro" id="IPR036343">
    <property type="entry name" value="GluRdtase_N_sf"/>
</dbReference>
<dbReference type="InterPro" id="IPR036291">
    <property type="entry name" value="NAD(P)-bd_dom_sf"/>
</dbReference>
<dbReference type="InterPro" id="IPR006151">
    <property type="entry name" value="Shikm_DH/Glu-tRNA_Rdtase"/>
</dbReference>
<dbReference type="NCBIfam" id="TIGR01035">
    <property type="entry name" value="hemA"/>
    <property type="match status" value="1"/>
</dbReference>
<dbReference type="PANTHER" id="PTHR43013">
    <property type="entry name" value="GLUTAMYL-TRNA REDUCTASE"/>
    <property type="match status" value="1"/>
</dbReference>
<dbReference type="PANTHER" id="PTHR43013:SF1">
    <property type="entry name" value="GLUTAMYL-TRNA REDUCTASE"/>
    <property type="match status" value="1"/>
</dbReference>
<dbReference type="Pfam" id="PF00745">
    <property type="entry name" value="GlutR_dimer"/>
    <property type="match status" value="1"/>
</dbReference>
<dbReference type="Pfam" id="PF05201">
    <property type="entry name" value="GlutR_N"/>
    <property type="match status" value="1"/>
</dbReference>
<dbReference type="Pfam" id="PF01488">
    <property type="entry name" value="Shikimate_DH"/>
    <property type="match status" value="1"/>
</dbReference>
<dbReference type="PIRSF" id="PIRSF000445">
    <property type="entry name" value="4pyrrol_synth_GluRdtase"/>
    <property type="match status" value="1"/>
</dbReference>
<dbReference type="SUPFAM" id="SSF69742">
    <property type="entry name" value="Glutamyl tRNA-reductase catalytic, N-terminal domain"/>
    <property type="match status" value="1"/>
</dbReference>
<dbReference type="SUPFAM" id="SSF69075">
    <property type="entry name" value="Glutamyl tRNA-reductase dimerization domain"/>
    <property type="match status" value="1"/>
</dbReference>
<dbReference type="SUPFAM" id="SSF51735">
    <property type="entry name" value="NAD(P)-binding Rossmann-fold domains"/>
    <property type="match status" value="1"/>
</dbReference>
<comment type="function">
    <text evidence="1">Catalyzes the NADPH-dependent reduction of glutamyl-tRNA(Glu) to glutamate 1-semialdehyde (GSA).</text>
</comment>
<comment type="catalytic activity">
    <reaction evidence="1">
        <text>(S)-4-amino-5-oxopentanoate + tRNA(Glu) + NADP(+) = L-glutamyl-tRNA(Glu) + NADPH + H(+)</text>
        <dbReference type="Rhea" id="RHEA:12344"/>
        <dbReference type="Rhea" id="RHEA-COMP:9663"/>
        <dbReference type="Rhea" id="RHEA-COMP:9680"/>
        <dbReference type="ChEBI" id="CHEBI:15378"/>
        <dbReference type="ChEBI" id="CHEBI:57501"/>
        <dbReference type="ChEBI" id="CHEBI:57783"/>
        <dbReference type="ChEBI" id="CHEBI:58349"/>
        <dbReference type="ChEBI" id="CHEBI:78442"/>
        <dbReference type="ChEBI" id="CHEBI:78520"/>
        <dbReference type="EC" id="1.2.1.70"/>
    </reaction>
</comment>
<comment type="pathway">
    <text evidence="1">Porphyrin-containing compound metabolism; protoporphyrin-IX biosynthesis; 5-aminolevulinate from L-glutamyl-tRNA(Glu): step 1/2.</text>
</comment>
<comment type="subunit">
    <text evidence="1">Homodimer.</text>
</comment>
<comment type="domain">
    <text evidence="1">Possesses an unusual extended V-shaped dimeric structure with each monomer consisting of three distinct domains arranged along a curved 'spinal' alpha-helix. The N-terminal catalytic domain specifically recognizes the glutamate moiety of the substrate. The second domain is the NADPH-binding domain, and the third C-terminal domain is responsible for dimerization.</text>
</comment>
<comment type="miscellaneous">
    <text evidence="1">During catalysis, the active site Cys acts as a nucleophile attacking the alpha-carbonyl group of tRNA-bound glutamate with the formation of a thioester intermediate between enzyme and glutamate, and the concomitant release of tRNA(Glu). The thioester intermediate is finally reduced by direct hydride transfer from NADPH, to form the product GSA.</text>
</comment>
<comment type="similarity">
    <text evidence="1">Belongs to the glutamyl-tRNA reductase family.</text>
</comment>
<comment type="sequence caution" evidence="2">
    <conflict type="erroneous initiation">
        <sequence resource="EMBL-CDS" id="AAU28397"/>
    </conflict>
</comment>
<evidence type="ECO:0000255" key="1">
    <source>
        <dbReference type="HAMAP-Rule" id="MF_00087"/>
    </source>
</evidence>
<evidence type="ECO:0000305" key="2"/>
<organism>
    <name type="scientific">Legionella pneumophila subsp. pneumophila (strain Philadelphia 1 / ATCC 33152 / DSM 7513)</name>
    <dbReference type="NCBI Taxonomy" id="272624"/>
    <lineage>
        <taxon>Bacteria</taxon>
        <taxon>Pseudomonadati</taxon>
        <taxon>Pseudomonadota</taxon>
        <taxon>Gammaproteobacteria</taxon>
        <taxon>Legionellales</taxon>
        <taxon>Legionellaceae</taxon>
        <taxon>Legionella</taxon>
    </lineage>
</organism>
<name>HEM1_LEGPH</name>
<sequence length="424" mass="47884">MVFVACGLNHKTAPIHVREKVALQPAMQDSLLSSLLDLPEVNEAAILSTCNRTEIYCDTNTPEVLGNWLAHEHQLSEELLSQFLYIHQGKEGIKHTLRVASGLDSMMIGEPQILGQMKQAYQHACRLGTVKTQLRPVFEYIFRASKRIRTRSGIGANPVSIAYAAVQLIGQLFKNYHSLSVFLIGSGETASLVAKYLHQHGVHRFLIASRTLENAQKLAETFGGKTLSIGDIPQYLPLADVVISATACPLPFINKSLVEHALEQRNHAPMFLLDLAVPRDIEGNVNELEQVHLYNVDDLQSMIEKGMDERRNAALQAEQLIESELDNYIRWHRSLRAKDVICDYRNQMHTLAQQELQRALKKISAGQNQQDVLNEFSMRLVNKLTHNPTIGLRQIAWDNREDLLDLARYLFDTTANQSLYEEIS</sequence>
<gene>
    <name evidence="1" type="primary">hemA</name>
    <name type="ordered locus">lpg2335</name>
</gene>
<accession>Q5ZT30</accession>
<proteinExistence type="inferred from homology"/>
<feature type="chain" id="PRO_0000335050" description="Glutamyl-tRNA reductase">
    <location>
        <begin position="1"/>
        <end position="424"/>
    </location>
</feature>
<feature type="active site" description="Nucleophile" evidence="1">
    <location>
        <position position="50"/>
    </location>
</feature>
<feature type="binding site" evidence="1">
    <location>
        <begin position="49"/>
        <end position="52"/>
    </location>
    <ligand>
        <name>substrate</name>
    </ligand>
</feature>
<feature type="binding site" evidence="1">
    <location>
        <position position="105"/>
    </location>
    <ligand>
        <name>substrate</name>
    </ligand>
</feature>
<feature type="binding site" evidence="1">
    <location>
        <begin position="110"/>
        <end position="112"/>
    </location>
    <ligand>
        <name>substrate</name>
    </ligand>
</feature>
<feature type="binding site" evidence="1">
    <location>
        <position position="116"/>
    </location>
    <ligand>
        <name>substrate</name>
    </ligand>
</feature>
<feature type="binding site" evidence="1">
    <location>
        <begin position="185"/>
        <end position="190"/>
    </location>
    <ligand>
        <name>NADP(+)</name>
        <dbReference type="ChEBI" id="CHEBI:58349"/>
    </ligand>
</feature>
<feature type="site" description="Important for activity" evidence="1">
    <location>
        <position position="95"/>
    </location>
</feature>